<comment type="similarity">
    <text evidence="1">Belongs to the bacterial ribosomal protein bL36 family.</text>
</comment>
<keyword id="KW-0687">Ribonucleoprotein</keyword>
<keyword id="KW-0689">Ribosomal protein</keyword>
<dbReference type="EMBL" id="CP000269">
    <property type="protein sequence ID" value="ABR91374.1"/>
    <property type="molecule type" value="Genomic_DNA"/>
</dbReference>
<dbReference type="RefSeq" id="WP_012081231.1">
    <property type="nucleotide sequence ID" value="NC_009659.1"/>
</dbReference>
<dbReference type="SMR" id="A6T3I2"/>
<dbReference type="STRING" id="375286.mma_3389"/>
<dbReference type="KEGG" id="mms:mma_3389"/>
<dbReference type="eggNOG" id="COG0257">
    <property type="taxonomic scope" value="Bacteria"/>
</dbReference>
<dbReference type="HOGENOM" id="CLU_135723_6_2_4"/>
<dbReference type="OrthoDB" id="9802520at2"/>
<dbReference type="Proteomes" id="UP000006388">
    <property type="component" value="Chromosome"/>
</dbReference>
<dbReference type="GO" id="GO:0005737">
    <property type="term" value="C:cytoplasm"/>
    <property type="evidence" value="ECO:0007669"/>
    <property type="project" value="UniProtKB-ARBA"/>
</dbReference>
<dbReference type="GO" id="GO:1990904">
    <property type="term" value="C:ribonucleoprotein complex"/>
    <property type="evidence" value="ECO:0007669"/>
    <property type="project" value="UniProtKB-KW"/>
</dbReference>
<dbReference type="GO" id="GO:0005840">
    <property type="term" value="C:ribosome"/>
    <property type="evidence" value="ECO:0007669"/>
    <property type="project" value="UniProtKB-KW"/>
</dbReference>
<dbReference type="GO" id="GO:0003735">
    <property type="term" value="F:structural constituent of ribosome"/>
    <property type="evidence" value="ECO:0007669"/>
    <property type="project" value="InterPro"/>
</dbReference>
<dbReference type="GO" id="GO:0006412">
    <property type="term" value="P:translation"/>
    <property type="evidence" value="ECO:0007669"/>
    <property type="project" value="UniProtKB-UniRule"/>
</dbReference>
<dbReference type="HAMAP" id="MF_00251">
    <property type="entry name" value="Ribosomal_bL36"/>
    <property type="match status" value="1"/>
</dbReference>
<dbReference type="InterPro" id="IPR000473">
    <property type="entry name" value="Ribosomal_bL36"/>
</dbReference>
<dbReference type="InterPro" id="IPR035977">
    <property type="entry name" value="Ribosomal_bL36_sp"/>
</dbReference>
<dbReference type="NCBIfam" id="TIGR01022">
    <property type="entry name" value="rpmJ_bact"/>
    <property type="match status" value="1"/>
</dbReference>
<dbReference type="PANTHER" id="PTHR42888">
    <property type="entry name" value="50S RIBOSOMAL PROTEIN L36, CHLOROPLASTIC"/>
    <property type="match status" value="1"/>
</dbReference>
<dbReference type="PANTHER" id="PTHR42888:SF1">
    <property type="entry name" value="LARGE RIBOSOMAL SUBUNIT PROTEIN BL36C"/>
    <property type="match status" value="1"/>
</dbReference>
<dbReference type="Pfam" id="PF00444">
    <property type="entry name" value="Ribosomal_L36"/>
    <property type="match status" value="1"/>
</dbReference>
<dbReference type="SUPFAM" id="SSF57840">
    <property type="entry name" value="Ribosomal protein L36"/>
    <property type="match status" value="1"/>
</dbReference>
<dbReference type="PROSITE" id="PS00828">
    <property type="entry name" value="RIBOSOMAL_L36"/>
    <property type="match status" value="1"/>
</dbReference>
<reference key="1">
    <citation type="journal article" date="2007" name="PLoS Genet.">
        <title>Genome analysis of Minibacterium massiliensis highlights the convergent evolution of water-living bacteria.</title>
        <authorList>
            <person name="Audic S."/>
            <person name="Robert C."/>
            <person name="Campagna B."/>
            <person name="Parinello H."/>
            <person name="Claverie J.-M."/>
            <person name="Raoult D."/>
            <person name="Drancourt M."/>
        </authorList>
    </citation>
    <scope>NUCLEOTIDE SEQUENCE [LARGE SCALE GENOMIC DNA]</scope>
    <source>
        <strain>Marseille</strain>
    </source>
</reference>
<proteinExistence type="inferred from homology"/>
<accession>A6T3I2</accession>
<evidence type="ECO:0000255" key="1">
    <source>
        <dbReference type="HAMAP-Rule" id="MF_00251"/>
    </source>
</evidence>
<evidence type="ECO:0000305" key="2"/>
<gene>
    <name evidence="1" type="primary">rpmJ</name>
    <name type="ordered locus">mma_3389</name>
</gene>
<name>RL36_JANMA</name>
<protein>
    <recommendedName>
        <fullName evidence="1">Large ribosomal subunit protein bL36</fullName>
    </recommendedName>
    <alternativeName>
        <fullName evidence="2">50S ribosomal protein L36</fullName>
    </alternativeName>
</protein>
<feature type="chain" id="PRO_1000003404" description="Large ribosomal subunit protein bL36">
    <location>
        <begin position="1"/>
        <end position="37"/>
    </location>
</feature>
<organism>
    <name type="scientific">Janthinobacterium sp. (strain Marseille)</name>
    <name type="common">Minibacterium massiliensis</name>
    <dbReference type="NCBI Taxonomy" id="375286"/>
    <lineage>
        <taxon>Bacteria</taxon>
        <taxon>Pseudomonadati</taxon>
        <taxon>Pseudomonadota</taxon>
        <taxon>Betaproteobacteria</taxon>
        <taxon>Burkholderiales</taxon>
        <taxon>Oxalobacteraceae</taxon>
        <taxon>Janthinobacterium</taxon>
    </lineage>
</organism>
<sequence>MKVLASVKRICRNCKIIKRKGVVRVICIEPRHKQRQG</sequence>